<comment type="alternative products">
    <event type="alternative splicing"/>
    <isoform>
        <id>Q9ZW14-1</id>
        <name>1</name>
        <sequence type="displayed"/>
    </isoform>
    <text>A number of isoforms are produced. According to EST sequences.</text>
</comment>
<comment type="similarity">
    <text evidence="3">Belongs to the short-chain dehydrogenases/reductases (SDR) family. SDR65C subfamily.</text>
</comment>
<sequence>MDKRWSLQGMTALVTGAASGIGYAIVEELASFGAIIHICDISETLLSQSLSEWEKKGFQVSGSICDVASRPDREKLMQTVSSLFDGKLNILVNNVGVIRGKPTTEYVAEDFSYHISTNLEPAFHFSQLSHLLLKASGFGSIVFMSSATGVVSVQCGSIYSLTKGALNQLTRNLACEWAKDGIRANAVAPNVVKTPLSQSYLEDVGFKEALFSRTPLGRAGEPNEVASLVVFLCLPAASYITGQTICIDGGFTVNAFSYKPQA</sequence>
<accession>Q9ZW14</accession>
<dbReference type="EC" id="1.1.1.-" evidence="3"/>
<dbReference type="EMBL" id="AC004561">
    <property type="protein sequence ID" value="AAC95207.1"/>
    <property type="molecule type" value="Genomic_DNA"/>
</dbReference>
<dbReference type="EMBL" id="CP002685">
    <property type="protein sequence ID" value="AEC08232.1"/>
    <property type="molecule type" value="Genomic_DNA"/>
</dbReference>
<dbReference type="EMBL" id="BT010425">
    <property type="protein sequence ID" value="AAQ62426.1"/>
    <property type="molecule type" value="mRNA"/>
</dbReference>
<dbReference type="EMBL" id="AK175221">
    <property type="protein sequence ID" value="BAD42984.1"/>
    <property type="molecule type" value="mRNA"/>
</dbReference>
<dbReference type="PIR" id="G84694">
    <property type="entry name" value="G84694"/>
</dbReference>
<dbReference type="RefSeq" id="NP_180492.1">
    <molecule id="Q9ZW14-1"/>
    <property type="nucleotide sequence ID" value="NM_128485.4"/>
</dbReference>
<dbReference type="SMR" id="Q9ZW14"/>
<dbReference type="FunCoup" id="Q9ZW14">
    <property type="interactions" value="238"/>
</dbReference>
<dbReference type="IntAct" id="Q9ZW14">
    <property type="interactions" value="5"/>
</dbReference>
<dbReference type="STRING" id="3702.Q9ZW14"/>
<dbReference type="PaxDb" id="3702-AT2G29310.1"/>
<dbReference type="ProteomicsDB" id="232444">
    <molecule id="Q9ZW14-1"/>
</dbReference>
<dbReference type="EnsemblPlants" id="AT2G29310.1">
    <molecule id="Q9ZW14-1"/>
    <property type="protein sequence ID" value="AT2G29310.1"/>
    <property type="gene ID" value="AT2G29310"/>
</dbReference>
<dbReference type="GeneID" id="817480"/>
<dbReference type="Gramene" id="AT2G29310.1">
    <molecule id="Q9ZW14-1"/>
    <property type="protein sequence ID" value="AT2G29310.1"/>
    <property type="gene ID" value="AT2G29310"/>
</dbReference>
<dbReference type="KEGG" id="ath:AT2G29310"/>
<dbReference type="Araport" id="AT2G29310"/>
<dbReference type="TAIR" id="AT2G29310"/>
<dbReference type="eggNOG" id="KOG0725">
    <property type="taxonomic scope" value="Eukaryota"/>
</dbReference>
<dbReference type="HOGENOM" id="CLU_010194_1_1_1"/>
<dbReference type="InParanoid" id="Q9ZW14"/>
<dbReference type="OMA" id="RPGQVFY"/>
<dbReference type="PhylomeDB" id="Q9ZW14"/>
<dbReference type="BioCyc" id="ARA:AT2G29310-MONOMER"/>
<dbReference type="PRO" id="PR:Q9ZW14"/>
<dbReference type="Proteomes" id="UP000006548">
    <property type="component" value="Chromosome 2"/>
</dbReference>
<dbReference type="ExpressionAtlas" id="Q9ZW14">
    <property type="expression patterns" value="baseline and differential"/>
</dbReference>
<dbReference type="GO" id="GO:0005777">
    <property type="term" value="C:peroxisome"/>
    <property type="evidence" value="ECO:0007005"/>
    <property type="project" value="TAIR"/>
</dbReference>
<dbReference type="GO" id="GO:0016491">
    <property type="term" value="F:oxidoreductase activity"/>
    <property type="evidence" value="ECO:0007669"/>
    <property type="project" value="UniProtKB-KW"/>
</dbReference>
<dbReference type="FunFam" id="3.40.50.720:FF:000084">
    <property type="entry name" value="Short-chain dehydrogenase reductase"/>
    <property type="match status" value="1"/>
</dbReference>
<dbReference type="Gene3D" id="3.40.50.720">
    <property type="entry name" value="NAD(P)-binding Rossmann-like Domain"/>
    <property type="match status" value="1"/>
</dbReference>
<dbReference type="InterPro" id="IPR036291">
    <property type="entry name" value="NAD(P)-bd_dom_sf"/>
</dbReference>
<dbReference type="InterPro" id="IPR002347">
    <property type="entry name" value="SDR_fam"/>
</dbReference>
<dbReference type="InterPro" id="IPR045000">
    <property type="entry name" value="TR"/>
</dbReference>
<dbReference type="PANTHER" id="PTHR42898:SF43">
    <property type="entry name" value="GENOME ASSEMBLY, CHROMOSOME: A03"/>
    <property type="match status" value="1"/>
</dbReference>
<dbReference type="PANTHER" id="PTHR42898">
    <property type="entry name" value="TROPINONE REDUCTASE"/>
    <property type="match status" value="1"/>
</dbReference>
<dbReference type="Pfam" id="PF13561">
    <property type="entry name" value="adh_short_C2"/>
    <property type="match status" value="1"/>
</dbReference>
<dbReference type="PRINTS" id="PR00081">
    <property type="entry name" value="GDHRDH"/>
</dbReference>
<dbReference type="PRINTS" id="PR00080">
    <property type="entry name" value="SDRFAMILY"/>
</dbReference>
<dbReference type="SUPFAM" id="SSF51735">
    <property type="entry name" value="NAD(P)-binding Rossmann-fold domains"/>
    <property type="match status" value="1"/>
</dbReference>
<feature type="chain" id="PRO_0000432363" description="Tropinone reductase homolog At2g29310">
    <location>
        <begin position="1"/>
        <end position="262"/>
    </location>
</feature>
<feature type="active site" description="Proton acceptor" evidence="2">
    <location>
        <position position="159"/>
    </location>
</feature>
<feature type="binding site" evidence="1">
    <location>
        <begin position="13"/>
        <end position="37"/>
    </location>
    <ligand>
        <name>NADP(+)</name>
        <dbReference type="ChEBI" id="CHEBI:58349"/>
    </ligand>
</feature>
<feature type="binding site" evidence="1">
    <location>
        <position position="146"/>
    </location>
    <ligand>
        <name>substrate</name>
    </ligand>
</feature>
<evidence type="ECO:0000250" key="1">
    <source>
        <dbReference type="UniProtKB" id="P50162"/>
    </source>
</evidence>
<evidence type="ECO:0000255" key="2">
    <source>
        <dbReference type="PROSITE-ProRule" id="PRU10001"/>
    </source>
</evidence>
<evidence type="ECO:0000305" key="3"/>
<evidence type="ECO:0000312" key="4">
    <source>
        <dbReference type="Araport" id="AT2G29310"/>
    </source>
</evidence>
<evidence type="ECO:0000312" key="5">
    <source>
        <dbReference type="EMBL" id="AAC95207.1"/>
    </source>
</evidence>
<evidence type="ECO:0000312" key="6">
    <source>
        <dbReference type="Proteomes" id="UP000006548"/>
    </source>
</evidence>
<reference key="1">
    <citation type="journal article" date="1999" name="Nature">
        <title>Sequence and analysis of chromosome 2 of the plant Arabidopsis thaliana.</title>
        <authorList>
            <person name="Lin X."/>
            <person name="Kaul S."/>
            <person name="Rounsley S.D."/>
            <person name="Shea T.P."/>
            <person name="Benito M.-I."/>
            <person name="Town C.D."/>
            <person name="Fujii C.Y."/>
            <person name="Mason T.M."/>
            <person name="Bowman C.L."/>
            <person name="Barnstead M.E."/>
            <person name="Feldblyum T.V."/>
            <person name="Buell C.R."/>
            <person name="Ketchum K.A."/>
            <person name="Lee J.J."/>
            <person name="Ronning C.M."/>
            <person name="Koo H.L."/>
            <person name="Moffat K.S."/>
            <person name="Cronin L.A."/>
            <person name="Shen M."/>
            <person name="Pai G."/>
            <person name="Van Aken S."/>
            <person name="Umayam L."/>
            <person name="Tallon L.J."/>
            <person name="Gill J.E."/>
            <person name="Adams M.D."/>
            <person name="Carrera A.J."/>
            <person name="Creasy T.H."/>
            <person name="Goodman H.M."/>
            <person name="Somerville C.R."/>
            <person name="Copenhaver G.P."/>
            <person name="Preuss D."/>
            <person name="Nierman W.C."/>
            <person name="White O."/>
            <person name="Eisen J.A."/>
            <person name="Salzberg S.L."/>
            <person name="Fraser C.M."/>
            <person name="Venter J.C."/>
        </authorList>
    </citation>
    <scope>NUCLEOTIDE SEQUENCE [LARGE SCALE GENOMIC DNA]</scope>
    <source>
        <strain>cv. Columbia</strain>
    </source>
</reference>
<reference key="2">
    <citation type="journal article" date="2017" name="Plant J.">
        <title>Araport11: a complete reannotation of the Arabidopsis thaliana reference genome.</title>
        <authorList>
            <person name="Cheng C.Y."/>
            <person name="Krishnakumar V."/>
            <person name="Chan A.P."/>
            <person name="Thibaud-Nissen F."/>
            <person name="Schobel S."/>
            <person name="Town C.D."/>
        </authorList>
    </citation>
    <scope>GENOME REANNOTATION</scope>
    <source>
        <strain>cv. Columbia</strain>
    </source>
</reference>
<reference key="3">
    <citation type="journal article" date="2003" name="Science">
        <title>Empirical analysis of transcriptional activity in the Arabidopsis genome.</title>
        <authorList>
            <person name="Yamada K."/>
            <person name="Lim J."/>
            <person name="Dale J.M."/>
            <person name="Chen H."/>
            <person name="Shinn P."/>
            <person name="Palm C.J."/>
            <person name="Southwick A.M."/>
            <person name="Wu H.C."/>
            <person name="Kim C.J."/>
            <person name="Nguyen M."/>
            <person name="Pham P.K."/>
            <person name="Cheuk R.F."/>
            <person name="Karlin-Newmann G."/>
            <person name="Liu S.X."/>
            <person name="Lam B."/>
            <person name="Sakano H."/>
            <person name="Wu T."/>
            <person name="Yu G."/>
            <person name="Miranda M."/>
            <person name="Quach H.L."/>
            <person name="Tripp M."/>
            <person name="Chang C.H."/>
            <person name="Lee J.M."/>
            <person name="Toriumi M.J."/>
            <person name="Chan M.M."/>
            <person name="Tang C.C."/>
            <person name="Onodera C.S."/>
            <person name="Deng J.M."/>
            <person name="Akiyama K."/>
            <person name="Ansari Y."/>
            <person name="Arakawa T."/>
            <person name="Banh J."/>
            <person name="Banno F."/>
            <person name="Bowser L."/>
            <person name="Brooks S.Y."/>
            <person name="Carninci P."/>
            <person name="Chao Q."/>
            <person name="Choy N."/>
            <person name="Enju A."/>
            <person name="Goldsmith A.D."/>
            <person name="Gurjal M."/>
            <person name="Hansen N.F."/>
            <person name="Hayashizaki Y."/>
            <person name="Johnson-Hopson C."/>
            <person name="Hsuan V.W."/>
            <person name="Iida K."/>
            <person name="Karnes M."/>
            <person name="Khan S."/>
            <person name="Koesema E."/>
            <person name="Ishida J."/>
            <person name="Jiang P.X."/>
            <person name="Jones T."/>
            <person name="Kawai J."/>
            <person name="Kamiya A."/>
            <person name="Meyers C."/>
            <person name="Nakajima M."/>
            <person name="Narusaka M."/>
            <person name="Seki M."/>
            <person name="Sakurai T."/>
            <person name="Satou M."/>
            <person name="Tamse R."/>
            <person name="Vaysberg M."/>
            <person name="Wallender E.K."/>
            <person name="Wong C."/>
            <person name="Yamamura Y."/>
            <person name="Yuan S."/>
            <person name="Shinozaki K."/>
            <person name="Davis R.W."/>
            <person name="Theologis A."/>
            <person name="Ecker J.R."/>
        </authorList>
    </citation>
    <scope>NUCLEOTIDE SEQUENCE [LARGE SCALE MRNA]</scope>
    <source>
        <strain>cv. Columbia</strain>
    </source>
</reference>
<reference key="4">
    <citation type="submission" date="2004-09" db="EMBL/GenBank/DDBJ databases">
        <title>Large-scale analysis of RIKEN Arabidopsis full-length (RAFL) cDNAs.</title>
        <authorList>
            <person name="Totoki Y."/>
            <person name="Seki M."/>
            <person name="Ishida J."/>
            <person name="Nakajima M."/>
            <person name="Enju A."/>
            <person name="Kamiya A."/>
            <person name="Narusaka M."/>
            <person name="Shin-i T."/>
            <person name="Nakagawa M."/>
            <person name="Sakamoto N."/>
            <person name="Oishi K."/>
            <person name="Kohara Y."/>
            <person name="Kobayashi M."/>
            <person name="Toyoda A."/>
            <person name="Sakaki Y."/>
            <person name="Sakurai T."/>
            <person name="Iida K."/>
            <person name="Akiyama K."/>
            <person name="Satou M."/>
            <person name="Toyoda T."/>
            <person name="Konagaya A."/>
            <person name="Carninci P."/>
            <person name="Kawai J."/>
            <person name="Hayashizaki Y."/>
            <person name="Shinozaki K."/>
        </authorList>
    </citation>
    <scope>NUCLEOTIDE SEQUENCE [LARGE SCALE MRNA]</scope>
    <source>
        <strain>cv. Columbia</strain>
    </source>
</reference>
<reference key="5">
    <citation type="journal article" date="2009" name="Chem. Biol. Interact.">
        <title>The SDR (short-chain dehydrogenase/reductase and related enzymes) nomenclature initiative.</title>
        <authorList>
            <person name="Persson B."/>
            <person name="Kallberg Y."/>
            <person name="Bray J.E."/>
            <person name="Bruford E."/>
            <person name="Dellaporta S.L."/>
            <person name="Favia A.D."/>
            <person name="Duarte R.G."/>
            <person name="Joernvall H."/>
            <person name="Kavanagh K.L."/>
            <person name="Kedishvili N."/>
            <person name="Kisiela M."/>
            <person name="Maser E."/>
            <person name="Mindnich R."/>
            <person name="Orchard S."/>
            <person name="Penning T.M."/>
            <person name="Thornton J.M."/>
            <person name="Adamski J."/>
            <person name="Oppermann U."/>
        </authorList>
    </citation>
    <scope>GENE FAMILY</scope>
    <scope>NOMENCLATURE</scope>
</reference>
<name>TRNH8_ARATH</name>
<proteinExistence type="evidence at transcript level"/>
<keyword id="KW-0025">Alternative splicing</keyword>
<keyword id="KW-0521">NADP</keyword>
<keyword id="KW-0560">Oxidoreductase</keyword>
<keyword id="KW-1185">Reference proteome</keyword>
<gene>
    <name evidence="4" type="ordered locus">At2g29310</name>
    <name evidence="5" type="ORF">F16P2.31</name>
</gene>
<protein>
    <recommendedName>
        <fullName evidence="3">Tropinone reductase homolog At2g29310</fullName>
        <ecNumber evidence="3">1.1.1.-</ecNumber>
    </recommendedName>
</protein>
<organism evidence="6">
    <name type="scientific">Arabidopsis thaliana</name>
    <name type="common">Mouse-ear cress</name>
    <dbReference type="NCBI Taxonomy" id="3702"/>
    <lineage>
        <taxon>Eukaryota</taxon>
        <taxon>Viridiplantae</taxon>
        <taxon>Streptophyta</taxon>
        <taxon>Embryophyta</taxon>
        <taxon>Tracheophyta</taxon>
        <taxon>Spermatophyta</taxon>
        <taxon>Magnoliopsida</taxon>
        <taxon>eudicotyledons</taxon>
        <taxon>Gunneridae</taxon>
        <taxon>Pentapetalae</taxon>
        <taxon>rosids</taxon>
        <taxon>malvids</taxon>
        <taxon>Brassicales</taxon>
        <taxon>Brassicaceae</taxon>
        <taxon>Camelineae</taxon>
        <taxon>Arabidopsis</taxon>
    </lineage>
</organism>